<feature type="chain" id="PRO_0000094595" description="Multiple PDZ domain protein">
    <location>
        <begin position="1"/>
        <end position="2055"/>
    </location>
</feature>
<feature type="domain" description="L27" evidence="5">
    <location>
        <begin position="1"/>
        <end position="63"/>
    </location>
</feature>
<feature type="domain" description="PDZ 1" evidence="4">
    <location>
        <begin position="138"/>
        <end position="225"/>
    </location>
</feature>
<feature type="domain" description="PDZ 2" evidence="4">
    <location>
        <begin position="258"/>
        <end position="338"/>
    </location>
</feature>
<feature type="domain" description="PDZ 3" evidence="4">
    <location>
        <begin position="378"/>
        <end position="464"/>
    </location>
</feature>
<feature type="domain" description="PDZ 4" evidence="4">
    <location>
        <begin position="546"/>
        <end position="627"/>
    </location>
</feature>
<feature type="domain" description="PDZ 5" evidence="4">
    <location>
        <begin position="693"/>
        <end position="779"/>
    </location>
</feature>
<feature type="domain" description="PDZ 6" evidence="4">
    <location>
        <begin position="996"/>
        <end position="1077"/>
    </location>
</feature>
<feature type="domain" description="PDZ 7" evidence="4">
    <location>
        <begin position="1139"/>
        <end position="1231"/>
    </location>
</feature>
<feature type="domain" description="PDZ 8" evidence="4">
    <location>
        <begin position="1338"/>
        <end position="1421"/>
    </location>
</feature>
<feature type="domain" description="PDZ 9" evidence="4">
    <location>
        <begin position="1471"/>
        <end position="1552"/>
    </location>
</feature>
<feature type="domain" description="PDZ 10" evidence="4">
    <location>
        <begin position="1614"/>
        <end position="1697"/>
    </location>
</feature>
<feature type="domain" description="PDZ 11" evidence="4">
    <location>
        <begin position="1710"/>
        <end position="1792"/>
    </location>
</feature>
<feature type="domain" description="PDZ 12" evidence="4">
    <location>
        <begin position="1847"/>
        <end position="1933"/>
    </location>
</feature>
<feature type="domain" description="PDZ 13" evidence="4">
    <location>
        <begin position="1972"/>
        <end position="2055"/>
    </location>
</feature>
<feature type="region of interest" description="Disordered" evidence="6">
    <location>
        <begin position="348"/>
        <end position="372"/>
    </location>
</feature>
<feature type="region of interest" description="Disordered" evidence="6">
    <location>
        <begin position="1111"/>
        <end position="1130"/>
    </location>
</feature>
<feature type="region of interest" description="Disordered" evidence="6">
    <location>
        <begin position="1264"/>
        <end position="1299"/>
    </location>
</feature>
<feature type="region of interest" description="Disordered" evidence="6">
    <location>
        <begin position="1435"/>
        <end position="1459"/>
    </location>
</feature>
<feature type="region of interest" description="Disordered" evidence="6">
    <location>
        <begin position="1557"/>
        <end position="1597"/>
    </location>
</feature>
<feature type="region of interest" description="Disordered" evidence="6">
    <location>
        <begin position="1795"/>
        <end position="1834"/>
    </location>
</feature>
<feature type="compositionally biased region" description="Low complexity" evidence="6">
    <location>
        <begin position="348"/>
        <end position="360"/>
    </location>
</feature>
<feature type="compositionally biased region" description="Polar residues" evidence="6">
    <location>
        <begin position="1264"/>
        <end position="1274"/>
    </location>
</feature>
<feature type="compositionally biased region" description="Low complexity" evidence="6">
    <location>
        <begin position="1435"/>
        <end position="1445"/>
    </location>
</feature>
<feature type="compositionally biased region" description="Low complexity" evidence="6">
    <location>
        <begin position="1803"/>
        <end position="1815"/>
    </location>
</feature>
<feature type="compositionally biased region" description="Polar residues" evidence="6">
    <location>
        <begin position="1816"/>
        <end position="1834"/>
    </location>
</feature>
<feature type="modified residue" description="Phosphoserine" evidence="3">
    <location>
        <position position="231"/>
    </location>
</feature>
<feature type="modified residue" description="Phosphoserine" evidence="3">
    <location>
        <position position="783"/>
    </location>
</feature>
<feature type="modified residue" description="Phosphoserine" evidence="3">
    <location>
        <position position="1066"/>
    </location>
</feature>
<feature type="modified residue" description="Omega-N-methylarginine" evidence="22">
    <location>
        <position position="1158"/>
    </location>
</feature>
<feature type="modified residue" description="Phosphoserine" evidence="3">
    <location>
        <position position="1803"/>
    </location>
</feature>
<feature type="modified residue" description="Phosphoserine" evidence="2">
    <location>
        <position position="1809"/>
    </location>
</feature>
<feature type="splice variant" id="VSP_058771" description="In isoform 3." evidence="19">
    <location>
        <begin position="1"/>
        <end position="1908"/>
    </location>
</feature>
<feature type="splice variant" id="VSP_014201" description="In isoform 2." evidence="18">
    <location>
        <begin position="1236"/>
        <end position="1268"/>
    </location>
</feature>
<feature type="splice variant" id="VSP_014202" description="In isoform 4." evidence="20">
    <original>Q</original>
    <variation>QLQ</variation>
    <location>
        <position position="1714"/>
    </location>
</feature>
<feature type="sequence variant" description="In strain: DBA/2J and DBA1/J." evidence="11">
    <original>N</original>
    <variation>S</variation>
    <location>
        <position position="541"/>
    </location>
</feature>
<feature type="sequence variant" description="In strain: DBA/2J, DBA1/J, CE/J, A/HeJ, BALB/cJ, C57Br/cdJ, C57L/J, WSP2 and 129/J." evidence="11">
    <original>G</original>
    <variation>V</variation>
    <location>
        <position position="691"/>
    </location>
</feature>
<feature type="sequence variant" description="In strain: DBA/2J, DBA1/J, CE/J, A/HeJ, BALB/cJ, C57Br/cdJ, C57L/J, WSP2 and 129/J." evidence="11">
    <original>H</original>
    <variation>R</variation>
    <location>
        <position position="801"/>
    </location>
</feature>
<feature type="sequence variant" description="In strain: DBA/2J, DBA1/J, CE/J, A/HeJ, BALB/cJ, C57Br/cdJ, C57L/J, WSP2 and 129/J." evidence="11">
    <original>T</original>
    <variation>A</variation>
    <location>
        <position position="859"/>
    </location>
</feature>
<feature type="sequence variant" description="In strain: DBA/2J, DBA1/J, CE/J, A/HeJ, BALB/cJ, C57Br/cdJ, C57L/J, WSP2 and 129/J." evidence="11">
    <original>S</original>
    <variation>N</variation>
    <location>
        <position position="880"/>
    </location>
</feature>
<feature type="sequence variant" description="In strain: DBA/2J, DBA1/J, CE/J, A/HeJ, BALB/cJ, C57Br/cdJ, C57L/J, WSP2 and 129/J." evidence="11">
    <original>R</original>
    <variation>S</variation>
    <location>
        <position position="914"/>
    </location>
</feature>
<feature type="sequence variant" description="In strain: DBA/2J, DBA1/J, CE/J, A/HeJ, BALB/cJ, C57Br/cdJ, C57L/J, WSP2 and 129/J." evidence="11">
    <original>A</original>
    <variation>V</variation>
    <location>
        <position position="977"/>
    </location>
</feature>
<feature type="sequence variant" description="In strain: DBA/2J, DBA1/J, CE/J, A/HeJ, BALB/cJ, C57Br/cdJ, C57L/J, WSP2 and 129/J." evidence="11">
    <original>V</original>
    <variation>M</variation>
    <location>
        <position position="1338"/>
    </location>
</feature>
<feature type="sequence variant" description="In strain: DBA/2J, DBA1/J, CE/J, A/HeJ, BALB/cJ, C57Br/cdJ, C57L/J, WSP2 and 129/J." evidence="11">
    <original>I</original>
    <variation>N</variation>
    <location>
        <position position="1433"/>
    </location>
</feature>
<feature type="sequence variant" description="In strain: DBA/2J, DBA1/J, CE/J, A/HeJ, BALB/cJ, C57Br/cdJ, C57L/J, WSP2 and 129/J." evidence="11">
    <original>H</original>
    <variation>N</variation>
    <location>
        <position position="1767"/>
    </location>
</feature>
<feature type="sequence conflict" description="In Ref. 1; CAA10523." evidence="21" ref="1">
    <original>S</original>
    <variation>N</variation>
    <location>
        <position position="583"/>
    </location>
</feature>
<feature type="sequence conflict" description="In Ref. 1; CAA10523." evidence="21" ref="1">
    <original>S</original>
    <variation>N</variation>
    <location>
        <position position="588"/>
    </location>
</feature>
<feature type="sequence conflict" description="In Ref. 1; CAA10523." evidence="21" ref="1">
    <original>P</original>
    <variation>S</variation>
    <location>
        <position position="871"/>
    </location>
</feature>
<feature type="sequence conflict" description="In Ref. 1; CAA10523." evidence="21" ref="1">
    <original>PP</original>
    <variation>SS</variation>
    <location>
        <begin position="909"/>
        <end position="910"/>
    </location>
</feature>
<feature type="sequence conflict" description="In Ref. 1; CAA10523." evidence="21" ref="1">
    <original>RPAPTS</original>
    <variation>KPTPTF</variation>
    <location>
        <begin position="914"/>
        <end position="919"/>
    </location>
</feature>
<feature type="sequence conflict" description="In Ref. 1; CAA10523." evidence="21" ref="1">
    <original>V</original>
    <variation>G</variation>
    <location>
        <position position="932"/>
    </location>
</feature>
<feature type="sequence conflict" description="In Ref. 1; CAA10523." evidence="21" ref="1">
    <original>EC</original>
    <variation>QW</variation>
    <location>
        <begin position="937"/>
        <end position="938"/>
    </location>
</feature>
<feature type="sequence conflict" description="In Ref. 1; CAA10523." evidence="21" ref="1">
    <original>S</original>
    <variation>N</variation>
    <location>
        <position position="952"/>
    </location>
</feature>
<feature type="sequence conflict" description="In Ref. 1; CAA10523." evidence="21" ref="1">
    <original>S</original>
    <variation>F</variation>
    <location>
        <position position="956"/>
    </location>
</feature>
<feature type="sequence conflict" description="In Ref. 1; CAA10523." evidence="21" ref="1">
    <original>P</original>
    <variation>S</variation>
    <location>
        <position position="960"/>
    </location>
</feature>
<feature type="sequence conflict" description="In Ref. 1; CAA10523." evidence="21" ref="1">
    <original>P</original>
    <variation>A</variation>
    <location>
        <position position="963"/>
    </location>
</feature>
<feature type="sequence conflict" description="In Ref. 1; CAA10523." evidence="21" ref="1">
    <original>Q</original>
    <variation>P</variation>
    <location>
        <position position="967"/>
    </location>
</feature>
<feature type="sequence conflict" description="In Ref. 1; CAA10523." evidence="21" ref="1">
    <original>SS</original>
    <variation>TF</variation>
    <location>
        <begin position="974"/>
        <end position="975"/>
    </location>
</feature>
<feature type="sequence conflict" description="In Ref. 1; CAA10523." evidence="21" ref="1">
    <original>N</original>
    <variation>T</variation>
    <location>
        <position position="984"/>
    </location>
</feature>
<feature type="sequence conflict" description="In Ref. 1; CAA10523." evidence="21" ref="1">
    <original>T</original>
    <variation>P</variation>
    <location>
        <position position="996"/>
    </location>
</feature>
<feature type="sequence conflict" description="In Ref. 5; AAB57835." evidence="21" ref="5">
    <original>K</original>
    <variation>N</variation>
    <location>
        <position position="1532"/>
    </location>
</feature>
<feature type="sequence conflict" description="In Ref. 5; AAB57835." evidence="21" ref="5">
    <original>T</original>
    <variation>I</variation>
    <location>
        <position position="1547"/>
    </location>
</feature>
<feature type="sequence conflict" description="In Ref. 1; CAA10523." evidence="21" ref="1">
    <original>T</original>
    <variation>P</variation>
    <location>
        <position position="1589"/>
    </location>
</feature>
<feature type="sequence conflict" description="In Ref. 5; AAB57835." evidence="21" ref="5">
    <original>EI</original>
    <variation>GV</variation>
    <location>
        <begin position="1616"/>
        <end position="1617"/>
    </location>
</feature>
<feature type="sequence conflict" description="In Ref. 5; AAB57835." evidence="21" ref="5">
    <original>L</original>
    <variation>V</variation>
    <location>
        <position position="1691"/>
    </location>
</feature>
<feature type="sequence conflict" description="In Ref. 5; AAB57835." evidence="21" ref="5">
    <original>G</original>
    <variation>R</variation>
    <location>
        <position position="1844"/>
    </location>
</feature>
<feature type="sequence conflict" description="In Ref. 4; AAH61504." evidence="21" ref="4">
    <original>A</original>
    <variation>V</variation>
    <location>
        <position position="1914"/>
    </location>
</feature>
<feature type="sequence conflict" description="In Ref. 1; CAA10523." evidence="21" ref="1">
    <original>P</original>
    <variation>S</variation>
    <location>
        <position position="1968"/>
    </location>
</feature>
<feature type="sequence conflict" description="In Ref. 1; CAA10523." evidence="21" ref="1">
    <original>GFS</original>
    <variation>SFN</variation>
    <location>
        <begin position="1983"/>
        <end position="1985"/>
    </location>
</feature>
<feature type="helix" evidence="23">
    <location>
        <begin position="521"/>
        <end position="538"/>
    </location>
</feature>
<feature type="strand" evidence="23">
    <location>
        <begin position="542"/>
        <end position="550"/>
    </location>
</feature>
<feature type="strand" evidence="23">
    <location>
        <begin position="559"/>
        <end position="565"/>
    </location>
</feature>
<feature type="strand" evidence="23">
    <location>
        <begin position="568"/>
        <end position="574"/>
    </location>
</feature>
<feature type="helix" evidence="23">
    <location>
        <begin position="579"/>
        <end position="583"/>
    </location>
</feature>
<feature type="strand" evidence="23">
    <location>
        <begin position="591"/>
        <end position="595"/>
    </location>
</feature>
<feature type="helix" evidence="23">
    <location>
        <begin position="605"/>
        <end position="613"/>
    </location>
</feature>
<feature type="strand" evidence="23">
    <location>
        <begin position="617"/>
        <end position="626"/>
    </location>
</feature>
<comment type="function">
    <text evidence="2 3">Member of the NMDAR signaling complex that may play a role in control of AMPAR potentiation and synaptic plasticity in excitatory synapses (By similarity). Promotes clustering of HT2RC at the cell surface (By similarity).</text>
</comment>
<comment type="subunit">
    <text evidence="1 7 8 9 10 13 14 15 16">Interacts with CLDN5, DLG4, GRIN1, SYNGAP1, CAMK2A and CAMK2B, HTR2A, HTR2B, HTR2C, PLEKHA1/TAPP1 and PLEKHA2/TAPP2 (By similarity). Interacts with F11R/JAM, CLDN1, NG2, CXADR, CRB1, MPP4 and PALS1. Interacts with FAT4 (via cytoplasmic domain). Interacts with DLL1 (PubMed:15509766).</text>
</comment>
<comment type="interaction">
    <interactant intactId="EBI-8026435">
        <id>Q8VBX6</id>
    </interactant>
    <interactant intactId="EBI-7158428">
        <id>O88551</id>
        <label>Cldn1</label>
    </interactant>
    <organismsDiffer>false</organismsDiffer>
    <experiments>2</experiments>
</comment>
<comment type="interaction">
    <interactant intactId="EBI-8026435">
        <id>Q8VBX6</id>
    </interactant>
    <interactant intactId="EBI-1379503">
        <id>P10721</id>
        <label>KIT</label>
    </interactant>
    <organismsDiffer>true</organismsDiffer>
    <experiments>4</experiments>
</comment>
<comment type="subcellular location">
    <subcellularLocation>
        <location>Cell membrane</location>
        <topology>Peripheral membrane protein</topology>
        <orientation>Cytoplasmic side</orientation>
    </subcellularLocation>
    <subcellularLocation>
        <location>Apical cell membrane</location>
        <topology>Peripheral membrane protein</topology>
        <orientation>Cytoplasmic side</orientation>
    </subcellularLocation>
    <subcellularLocation>
        <location>Postsynaptic density</location>
    </subcellularLocation>
    <subcellularLocation>
        <location>Cell projection</location>
        <location>Dendrite</location>
    </subcellularLocation>
    <subcellularLocation>
        <location evidence="1">Cell junction</location>
        <location evidence="1">Tight junction</location>
    </subcellularLocation>
    <subcellularLocation>
        <location>Synapse</location>
    </subcellularLocation>
    <subcellularLocation>
        <location evidence="1">Synapse</location>
        <location evidence="1">Synaptosome</location>
    </subcellularLocation>
    <text evidence="1 2">Colocalizes with HTR2C on the apical membrane of epithelial choroid plexus cells. Highly enriched in postsynaptic densities (PSD) (By similarity). Localized to punctae on dendrites of hippocampal neurons and colocalizes with the synaptic marker DLG4. Enriched at the tight junctions of epithelial cells. Association to the tight junctions depends on CXADR (By similarity). In the retina, localizes to the sub-apical region adjacent to the adherens junction complex at the outer limiting membrane. Localized mainly in the Schmidt-Lanterman incisures of myelinating Schwann cells.</text>
</comment>
<comment type="alternative products">
    <event type="alternative splicing"/>
    <isoform>
        <id>Q8VBX6-1</id>
        <name>1</name>
        <sequence type="displayed"/>
    </isoform>
    <isoform>
        <id>Q8VBX6-2</id>
        <name>2</name>
        <sequence type="described" ref="VSP_014201"/>
    </isoform>
    <isoform>
        <id>Q8VBX6-3</id>
        <name>3</name>
        <sequence type="described" ref="VSP_058771"/>
    </isoform>
    <isoform>
        <id>Q8VBX6-4</id>
        <name>4</name>
        <sequence type="described" ref="VSP_014202"/>
    </isoform>
</comment>
<comment type="tissue specificity">
    <text evidence="9 12">In the brain, it is strongly expressed in the choroid plexus. Within the hippocampal formation, strongest expression was seen in the soma of CA1-4 pyramidal cells. Expressed in most neocortical regions with the strongest expression in piriform cortex and amygdaloid nuclei but also detected in the subiculum and olfactory bulb. In the cerebellum, the highest level of expression was found in Purkinje cells. Moderately expressed in the granular layer and molecular layer. Expressed in the pontine nuclei, parts of spinal trigeminal nuclei, and the principal sensory trigeminal nuclei of the metencephalon. Expressed in all thalamic and hypothalamic nuclei, and the substantia nigra (at protein level). Ubiquitously expressed.</text>
</comment>
<comment type="developmental stage">
    <text evidence="17">Expressed at the outer limiting membrane of the retina at 3 months of age.</text>
</comment>
<comment type="domain">
    <text evidence="1 10 14">The PDZ domain 2 mainly binds CAMK2A and CAMK2B. The PDZ domains 7 and 10 bind the Ad9 E4-ORF1 oncoprotein. The PDZ domain 10 binds the C-terminal PDZ-binding motif of HTR2C. The PDZ domains 10 and 13 bind PLEKHA1 and PLEKHA2. The PDZ domain 13 binds SYNGAP1 (By similarity). The PDZ domain 1 binds NG2. The PDZ domain 9 binds F11R. The PDZ domain 10 binds the C-terminus of CLDN1 and KIT. The PDZ domain 13 binds CXADR.</text>
</comment>
<comment type="sequence caution" evidence="21">
    <conflict type="frameshift">
        <sequence resource="EMBL-CDS" id="BAC27346"/>
    </conflict>
</comment>
<comment type="sequence caution" evidence="21">
    <conflict type="miscellaneous discrepancy">
        <sequence resource="EMBL-CDS" id="BAC34766"/>
    </conflict>
    <text>Probable cloning artifact.</text>
</comment>
<sequence length="2055" mass="218711">MLETIDKNRALQAAERLQSKLKERGDVANEDKLSLLKSVLQSPLFSQILNLQTSLQQLKDQVNIATLATAAADHAHTPQFSSAVISNLQSESLLLSPNHGNLEALPGPGAPAVMDGKPTCDELDQLIKNMAQGRHVEIFELLKPPCGGLGFSVVGLRSENRGELGIFVQEIQEGSVAHRDGRLKETDQILAINGQVLDQTITHQQAISILQKAKDTVQLVIARGSLPPVSSPRISRSPSAASTISAHSNPMHWQHVETIELVNDGSGLGFGIIGGKATGVIVKTILPGGVADQHGRLCSGDHILKIGDTDLAGMSSEQVAQVLRQCGNRVKLMIARGAVEETPASSSLGITLSSSTSSTSEMRVDASTQKNDESETFDVELTKNVQGLGITIAGYIGDKKLEPSGIFVKSITKSSAVEHDGRIQIGDQIIAVDGTNLQGFTNQQAVEVLRHTGQTVRLTLMRKGASQEAELTSRGDTAKDVDLPAENCEKDEESLSLKRNTSILPIEEEGFPLLSAELEEAEDVQQEAALLTKWQRIMGINYEIVVAHVSKFSENSGLGISLEATVGHHFIRSVLPEGPVGHSGKLFSGDELLEVNGINLLGENHQDVVNILKELPIDVTMVCCRRTVPPIALSEMDSLDINDLELTEKPHIDLGEFIGSSETEDPMLAMSDVDQNAEEIQTPLAMWEAGGQSIELEKGSRGLGFSILDYQDPIDPANTVIVIRSLVPGGIAEKDGRLFPGDRLMFVNDINLENSTLEEAVEALKGAPSGMVRIGVAKPLPLSPEEGYVSAKEDAFLCSPHACKESGLSDKALFRADLALIDTPDAESIAESRFESQFSPDNDSVYSTQASIFSLHDGTCSDGMNYGPSLPSSPPKDVTSSSEVVLGLHLSLEELYTQNLLQRQHAGSPPTDMRPAPTSGFPISDYTTTNAVEQKYECANPVAWPHSQLPSSLSTSELAPALPAVAQKYLTDQSSLASDAESVNLQSMSQEAFERTVTIAKGSSSLGMTVSANKDGLGVIVRSIIHGGAISRDGRIAVGDCILSINEESTISLTNAQARAMLRRHSLIGPDIKITYVPAEHLEEFRVSFGQQAGGIMALDIFSSYTGRDIPELPEREEGEGEESELQNAAYSSWSQPRRVELWREPSKSLGISIVGGRGMGSRLSNGEVMRGIFIKHVLEDSPAGKNGTLKPGDRIIEVDGMDLRDASHEQAVEAIRKAGNPVVFMVQSIINRPRKSPLPSLPHSLYPKYSFSSTNPFADSLQLTTDQAPSQSESETEKPALCNVPPSSPSVFSEMGSDCAQPSATAVSEDEDKEDEFGYSWKNIQERYGSLTGQLHVIELEKGQSGLGLSLAGNKDRTRMSVFIVGIDPTGAAGRDGRLQIADELLEINGQILYGRSHQNASSIIKCAPSKVKIIFIRNADAVNQMAVCPGIAADSPSSTSDSPQNKEVEPCSTTSASAADLSSLTDVYQLELPKDQGGLGIAICEEDTINGVMIESLTEHGGAAKDGRLKPGDHILAVDDEVVAGCPVEKFISLLKTAKATVKLTVRAENPACPAVPSSAVTVSGERKDNSQTPAVPAPDLEPIPSTSRSSTPAVFASDPATCPIIPGCETTIEISKGQTGLGLSIVGGSDTLLGAIIIHEVYEEGAACKDGRLWAGDQILEVNGIDLRKATHDEAINVLRQTPQRVRLTLYRDEAPYKEEDVCDTFTIELQKRPGKGLGLSIVGKRNDTGVFVSDIVKGGIADADGRLMQGDQILMVNGEDVRHATQEAVAALLKCSLGAVTLEVGRVKAAPFHSERRPSQSSQVSESSLSSFTPPLSGINTSESLESNSKKNALASEIQGLRTVEIKKGPADSLGLSIAGGVGSPLGDVPIFIAMMHPNGVAAQTQKLRVGDRIVTICGTSTDGMTHTQAVNLMKNASGSIEVQVVAGGDVSVVTGHQQELANPCLAFTGLTSSSIFPDDLGPPQSKTITLDRGPDGLGFSIVGGYGSPHGDLPIYVKTVFAKGAAAEDGRLKRGDQIIAVNGQSLEGVTHEEAVAILKRTKGTVTLMVLS</sequence>
<organism>
    <name type="scientific">Mus musculus</name>
    <name type="common">Mouse</name>
    <dbReference type="NCBI Taxonomy" id="10090"/>
    <lineage>
        <taxon>Eukaryota</taxon>
        <taxon>Metazoa</taxon>
        <taxon>Chordata</taxon>
        <taxon>Craniata</taxon>
        <taxon>Vertebrata</taxon>
        <taxon>Euteleostomi</taxon>
        <taxon>Mammalia</taxon>
        <taxon>Eutheria</taxon>
        <taxon>Euarchontoglires</taxon>
        <taxon>Glires</taxon>
        <taxon>Rodentia</taxon>
        <taxon>Myomorpha</taxon>
        <taxon>Muroidea</taxon>
        <taxon>Muridae</taxon>
        <taxon>Murinae</taxon>
        <taxon>Mus</taxon>
        <taxon>Mus</taxon>
    </lineage>
</organism>
<proteinExistence type="evidence at protein level"/>
<accession>Q8VBX6</accession>
<accession>B7ZNA1</accession>
<accession>O08783</accession>
<accession>Q6P7U4</accession>
<accession>Q80ZY8</accession>
<accession>Q8BKJ1</accession>
<accession>Q8C0H8</accession>
<accession>Q8VBV5</accession>
<accession>Q8VBY0</accession>
<accession>Q9Z1K3</accession>
<dbReference type="EMBL" id="AJ131869">
    <property type="protein sequence ID" value="CAA10523.1"/>
    <property type="molecule type" value="mRNA"/>
</dbReference>
<dbReference type="EMBL" id="AF326526">
    <property type="protein sequence ID" value="AAL37372.1"/>
    <property type="molecule type" value="mRNA"/>
</dbReference>
<dbReference type="EMBL" id="AF326527">
    <property type="protein sequence ID" value="AAL37373.1"/>
    <property type="molecule type" value="mRNA"/>
</dbReference>
<dbReference type="EMBL" id="AF326528">
    <property type="protein sequence ID" value="AAL37374.1"/>
    <property type="molecule type" value="mRNA"/>
</dbReference>
<dbReference type="EMBL" id="AF326529">
    <property type="protein sequence ID" value="AAL37375.1"/>
    <property type="molecule type" value="mRNA"/>
</dbReference>
<dbReference type="EMBL" id="AF326530">
    <property type="protein sequence ID" value="AAL37376.1"/>
    <property type="molecule type" value="mRNA"/>
</dbReference>
<dbReference type="EMBL" id="AF326531">
    <property type="protein sequence ID" value="AAL37377.2"/>
    <property type="molecule type" value="mRNA"/>
</dbReference>
<dbReference type="EMBL" id="AF326532">
    <property type="protein sequence ID" value="AAL37378.1"/>
    <property type="molecule type" value="mRNA"/>
</dbReference>
<dbReference type="EMBL" id="AF326533">
    <property type="protein sequence ID" value="AAL37379.1"/>
    <property type="molecule type" value="mRNA"/>
</dbReference>
<dbReference type="EMBL" id="AF326534">
    <property type="protein sequence ID" value="AAL37380.1"/>
    <property type="molecule type" value="mRNA"/>
</dbReference>
<dbReference type="EMBL" id="AF326535">
    <property type="protein sequence ID" value="AAL37381.1"/>
    <property type="molecule type" value="mRNA"/>
</dbReference>
<dbReference type="EMBL" id="AF326536">
    <property type="protein sequence ID" value="AAL37382.1"/>
    <property type="molecule type" value="mRNA"/>
</dbReference>
<dbReference type="EMBL" id="AF326537">
    <property type="protein sequence ID" value="AAL37383.1"/>
    <property type="molecule type" value="mRNA"/>
</dbReference>
<dbReference type="EMBL" id="AF326538">
    <property type="protein sequence ID" value="AAL37384.1"/>
    <property type="molecule type" value="mRNA"/>
</dbReference>
<dbReference type="EMBL" id="AF326539">
    <property type="protein sequence ID" value="AAL37385.1"/>
    <property type="molecule type" value="mRNA"/>
</dbReference>
<dbReference type="EMBL" id="AF326540">
    <property type="protein sequence ID" value="AAL37386.1"/>
    <property type="molecule type" value="mRNA"/>
</dbReference>
<dbReference type="EMBL" id="AF326541">
    <property type="protein sequence ID" value="AAL37387.1"/>
    <property type="molecule type" value="mRNA"/>
</dbReference>
<dbReference type="EMBL" id="AF326542">
    <property type="protein sequence ID" value="AAL37388.1"/>
    <property type="molecule type" value="mRNA"/>
</dbReference>
<dbReference type="EMBL" id="AF326543">
    <property type="protein sequence ID" value="AAL37389.1"/>
    <property type="molecule type" value="mRNA"/>
</dbReference>
<dbReference type="EMBL" id="AF326544">
    <property type="protein sequence ID" value="AAL37390.1"/>
    <property type="molecule type" value="mRNA"/>
</dbReference>
<dbReference type="EMBL" id="AL670939">
    <property type="status" value="NOT_ANNOTATED_CDS"/>
    <property type="molecule type" value="Genomic_DNA"/>
</dbReference>
<dbReference type="EMBL" id="CR352325">
    <property type="status" value="NOT_ANNOTATED_CDS"/>
    <property type="molecule type" value="Genomic_DNA"/>
</dbReference>
<dbReference type="EMBL" id="BC061504">
    <property type="protein sequence ID" value="AAH61504.1"/>
    <property type="molecule type" value="mRNA"/>
</dbReference>
<dbReference type="EMBL" id="BC145117">
    <property type="protein sequence ID" value="AAI45118.1"/>
    <property type="molecule type" value="mRNA"/>
</dbReference>
<dbReference type="EMBL" id="AF000168">
    <property type="protein sequence ID" value="AAB57835.1"/>
    <property type="molecule type" value="mRNA"/>
</dbReference>
<dbReference type="EMBL" id="AK031321">
    <property type="protein sequence ID" value="BAC27346.1"/>
    <property type="status" value="ALT_FRAME"/>
    <property type="molecule type" value="mRNA"/>
</dbReference>
<dbReference type="EMBL" id="AK051782">
    <property type="protein sequence ID" value="BAC34766.1"/>
    <property type="status" value="ALT_SEQ"/>
    <property type="molecule type" value="mRNA"/>
</dbReference>
<dbReference type="CCDS" id="CCDS18292.1">
    <molecule id="Q8VBX6-1"/>
</dbReference>
<dbReference type="CCDS" id="CCDS89767.1">
    <molecule id="Q8VBX6-2"/>
</dbReference>
<dbReference type="PIR" id="T30259">
    <property type="entry name" value="T30259"/>
</dbReference>
<dbReference type="RefSeq" id="NP_001292213.1">
    <property type="nucleotide sequence ID" value="NM_001305284.1"/>
</dbReference>
<dbReference type="RefSeq" id="NP_001292215.1">
    <molecule id="Q8VBX6-2"/>
    <property type="nucleotide sequence ID" value="NM_001305286.2"/>
</dbReference>
<dbReference type="RefSeq" id="NP_034950.2">
    <molecule id="Q8VBX6-1"/>
    <property type="nucleotide sequence ID" value="NM_010820.4"/>
</dbReference>
<dbReference type="PDB" id="4XH7">
    <property type="method" value="X-ray"/>
    <property type="resolution" value="1.65 A"/>
    <property type="chains" value="A=521-665"/>
</dbReference>
<dbReference type="PDBsum" id="4XH7"/>
<dbReference type="SMR" id="Q8VBX6"/>
<dbReference type="BioGRID" id="201476">
    <property type="interactions" value="19"/>
</dbReference>
<dbReference type="CORUM" id="Q8VBX6"/>
<dbReference type="DIP" id="DIP-41165N"/>
<dbReference type="FunCoup" id="Q8VBX6">
    <property type="interactions" value="635"/>
</dbReference>
<dbReference type="IntAct" id="Q8VBX6">
    <property type="interactions" value="11"/>
</dbReference>
<dbReference type="MINT" id="Q8VBX6"/>
<dbReference type="STRING" id="10090.ENSMUSP00000099894"/>
<dbReference type="ChEMBL" id="CHEMBL2176783"/>
<dbReference type="GlyGen" id="Q8VBX6">
    <property type="glycosylation" value="3 sites, 1 N-linked glycan (1 site)"/>
</dbReference>
<dbReference type="iPTMnet" id="Q8VBX6"/>
<dbReference type="PhosphoSitePlus" id="Q8VBX6"/>
<dbReference type="jPOST" id="Q8VBX6"/>
<dbReference type="PaxDb" id="10090-ENSMUSP00000099894"/>
<dbReference type="ProteomicsDB" id="252603">
    <molecule id="Q8VBX6-1"/>
</dbReference>
<dbReference type="ProteomicsDB" id="252604">
    <molecule id="Q8VBX6-2"/>
</dbReference>
<dbReference type="ProteomicsDB" id="252605">
    <molecule id="Q8VBX6-3"/>
</dbReference>
<dbReference type="ProteomicsDB" id="252606">
    <molecule id="Q8VBX6-4"/>
</dbReference>
<dbReference type="Pumba" id="Q8VBX6"/>
<dbReference type="Antibodypedia" id="4615">
    <property type="antibodies" value="86 antibodies from 19 providers"/>
</dbReference>
<dbReference type="DNASU" id="17475"/>
<dbReference type="Ensembl" id="ENSMUST00000102830.10">
    <molecule id="Q8VBX6-1"/>
    <property type="protein sequence ID" value="ENSMUSP00000099894.4"/>
    <property type="gene ID" value="ENSMUSG00000028402.20"/>
</dbReference>
<dbReference type="Ensembl" id="ENSMUST00000107258.9">
    <molecule id="Q8VBX6-2"/>
    <property type="protein sequence ID" value="ENSMUSP00000102879.3"/>
    <property type="gene ID" value="ENSMUSG00000028402.20"/>
</dbReference>
<dbReference type="GeneID" id="17475"/>
<dbReference type="KEGG" id="mmu:17475"/>
<dbReference type="UCSC" id="uc008tjw.3">
    <molecule id="Q8VBX6-2"/>
    <property type="organism name" value="mouse"/>
</dbReference>
<dbReference type="UCSC" id="uc008tjx.2">
    <molecule id="Q8VBX6-1"/>
    <property type="organism name" value="mouse"/>
</dbReference>
<dbReference type="AGR" id="MGI:1343489"/>
<dbReference type="CTD" id="8777"/>
<dbReference type="MGI" id="MGI:1343489">
    <property type="gene designation" value="Mpdz"/>
</dbReference>
<dbReference type="VEuPathDB" id="HostDB:ENSMUSG00000028402"/>
<dbReference type="eggNOG" id="KOG3528">
    <property type="taxonomic scope" value="Eukaryota"/>
</dbReference>
<dbReference type="GeneTree" id="ENSGT00940000155586"/>
<dbReference type="HOGENOM" id="CLU_002378_0_0_1"/>
<dbReference type="InParanoid" id="Q8VBX6"/>
<dbReference type="OrthoDB" id="6022711at2759"/>
<dbReference type="TreeFam" id="TF330709"/>
<dbReference type="BioGRID-ORCS" id="17475">
    <property type="hits" value="1 hit in 62 CRISPR screens"/>
</dbReference>
<dbReference type="ChiTaRS" id="Mpdz">
    <property type="organism name" value="mouse"/>
</dbReference>
<dbReference type="EvolutionaryTrace" id="Q8VBX6"/>
<dbReference type="PRO" id="PR:Q8VBX6"/>
<dbReference type="Proteomes" id="UP000000589">
    <property type="component" value="Chromosome 4"/>
</dbReference>
<dbReference type="RNAct" id="Q8VBX6">
    <property type="molecule type" value="protein"/>
</dbReference>
<dbReference type="Bgee" id="ENSMUSG00000028402">
    <property type="expression patterns" value="Expressed in ureter smooth muscle and 264 other cell types or tissues"/>
</dbReference>
<dbReference type="ExpressionAtlas" id="Q8VBX6">
    <property type="expression patterns" value="baseline and differential"/>
</dbReference>
<dbReference type="GO" id="GO:0016324">
    <property type="term" value="C:apical plasma membrane"/>
    <property type="evidence" value="ECO:0000314"/>
    <property type="project" value="MGI"/>
</dbReference>
<dbReference type="GO" id="GO:0005923">
    <property type="term" value="C:bicellular tight junction"/>
    <property type="evidence" value="ECO:0000314"/>
    <property type="project" value="MGI"/>
</dbReference>
<dbReference type="GO" id="GO:0031410">
    <property type="term" value="C:cytoplasmic vesicle"/>
    <property type="evidence" value="ECO:0000314"/>
    <property type="project" value="MGI"/>
</dbReference>
<dbReference type="GO" id="GO:0030425">
    <property type="term" value="C:dendrite"/>
    <property type="evidence" value="ECO:0007669"/>
    <property type="project" value="UniProtKB-SubCell"/>
</dbReference>
<dbReference type="GO" id="GO:0014069">
    <property type="term" value="C:postsynaptic density"/>
    <property type="evidence" value="ECO:0007669"/>
    <property type="project" value="UniProtKB-SubCell"/>
</dbReference>
<dbReference type="GO" id="GO:0043220">
    <property type="term" value="C:Schmidt-Lanterman incisure"/>
    <property type="evidence" value="ECO:0000314"/>
    <property type="project" value="BHF-UCL"/>
</dbReference>
<dbReference type="GO" id="GO:0035003">
    <property type="term" value="C:subapical complex"/>
    <property type="evidence" value="ECO:0000314"/>
    <property type="project" value="MGI"/>
</dbReference>
<dbReference type="GO" id="GO:0045202">
    <property type="term" value="C:synapse"/>
    <property type="evidence" value="ECO:0000314"/>
    <property type="project" value="MGI"/>
</dbReference>
<dbReference type="GO" id="GO:0007155">
    <property type="term" value="P:cell adhesion"/>
    <property type="evidence" value="ECO:0000314"/>
    <property type="project" value="MGI"/>
</dbReference>
<dbReference type="GO" id="GO:0016358">
    <property type="term" value="P:dendrite development"/>
    <property type="evidence" value="ECO:0000315"/>
    <property type="project" value="MGI"/>
</dbReference>
<dbReference type="GO" id="GO:0006886">
    <property type="term" value="P:intracellular protein transport"/>
    <property type="evidence" value="ECO:0000315"/>
    <property type="project" value="MGI"/>
</dbReference>
<dbReference type="CDD" id="cd06673">
    <property type="entry name" value="PDZ10_MUPP1-PDZ8_PATJ-like"/>
    <property type="match status" value="1"/>
</dbReference>
<dbReference type="CDD" id="cd06674">
    <property type="entry name" value="PDZ11_MUPP1-PDZ9_PATJ-like"/>
    <property type="match status" value="1"/>
</dbReference>
<dbReference type="CDD" id="cd06675">
    <property type="entry name" value="PDZ12_MUPP1-like"/>
    <property type="match status" value="1"/>
</dbReference>
<dbReference type="CDD" id="cd06676">
    <property type="entry name" value="PDZ13_MUPP1-like"/>
    <property type="match status" value="1"/>
</dbReference>
<dbReference type="CDD" id="cd06689">
    <property type="entry name" value="PDZ1_MUPP1-like"/>
    <property type="match status" value="1"/>
</dbReference>
<dbReference type="CDD" id="cd06667">
    <property type="entry name" value="PDZ2_MUPP1-like"/>
    <property type="match status" value="1"/>
</dbReference>
<dbReference type="CDD" id="cd06791">
    <property type="entry name" value="PDZ3_MUPP1-like"/>
    <property type="match status" value="1"/>
</dbReference>
<dbReference type="CDD" id="cd06668">
    <property type="entry name" value="PDZ4_MUPP1-like"/>
    <property type="match status" value="1"/>
</dbReference>
<dbReference type="CDD" id="cd06669">
    <property type="entry name" value="PDZ5_MUPP1-like"/>
    <property type="match status" value="1"/>
</dbReference>
<dbReference type="CDD" id="cd06670">
    <property type="entry name" value="PDZ6_MUPP1-like"/>
    <property type="match status" value="1"/>
</dbReference>
<dbReference type="CDD" id="cd06671">
    <property type="entry name" value="PDZ7_MUPP1-PD6_PATJ-like"/>
    <property type="match status" value="1"/>
</dbReference>
<dbReference type="CDD" id="cd06672">
    <property type="entry name" value="PDZ8_MUPP1-PDZ7_PATJ-PDZ2_INAD-like"/>
    <property type="match status" value="1"/>
</dbReference>
<dbReference type="CDD" id="cd10817">
    <property type="entry name" value="PDZ9_MUPP1-like"/>
    <property type="match status" value="1"/>
</dbReference>
<dbReference type="FunFam" id="2.30.42.10:FF:000140">
    <property type="entry name" value="Multiple PDZ domain crumbs cell polarity complex component"/>
    <property type="match status" value="1"/>
</dbReference>
<dbReference type="FunFam" id="2.30.42.10:FF:000070">
    <property type="entry name" value="Multiple PDZ domain protein"/>
    <property type="match status" value="1"/>
</dbReference>
<dbReference type="FunFam" id="2.30.42.10:FF:000038">
    <property type="entry name" value="Multiple PDZ domain protein isoform X1"/>
    <property type="match status" value="1"/>
</dbReference>
<dbReference type="FunFam" id="2.30.42.10:FF:000051">
    <property type="entry name" value="Multiple PDZ domain protein isoform X1"/>
    <property type="match status" value="1"/>
</dbReference>
<dbReference type="FunFam" id="2.30.42.10:FF:000108">
    <property type="entry name" value="Multiple PDZ domain protein isoform X1"/>
    <property type="match status" value="1"/>
</dbReference>
<dbReference type="FunFam" id="2.30.42.10:FF:000054">
    <property type="entry name" value="multiple PDZ domain protein isoform X1"/>
    <property type="match status" value="1"/>
</dbReference>
<dbReference type="FunFam" id="2.30.42.10:FF:000057">
    <property type="entry name" value="multiple PDZ domain protein isoform X1"/>
    <property type="match status" value="1"/>
</dbReference>
<dbReference type="FunFam" id="2.30.42.10:FF:000058">
    <property type="entry name" value="multiple PDZ domain protein isoform X1"/>
    <property type="match status" value="1"/>
</dbReference>
<dbReference type="FunFam" id="2.30.42.10:FF:000072">
    <property type="entry name" value="multiple PDZ domain protein isoform X1"/>
    <property type="match status" value="1"/>
</dbReference>
<dbReference type="FunFam" id="2.30.42.10:FF:000089">
    <property type="entry name" value="multiple PDZ domain protein isoform X1"/>
    <property type="match status" value="1"/>
</dbReference>
<dbReference type="FunFam" id="2.30.42.10:FF:000093">
    <property type="entry name" value="multiple PDZ domain protein isoform X1"/>
    <property type="match status" value="1"/>
</dbReference>
<dbReference type="FunFam" id="2.30.42.10:FF:000110">
    <property type="entry name" value="multiple PDZ domain protein isoform X2"/>
    <property type="match status" value="1"/>
</dbReference>
<dbReference type="Gene3D" id="2.30.42.10">
    <property type="match status" value="13"/>
</dbReference>
<dbReference type="Gene3D" id="1.10.287.650">
    <property type="entry name" value="L27 domain"/>
    <property type="match status" value="1"/>
</dbReference>
<dbReference type="InterPro" id="IPR015132">
    <property type="entry name" value="L27_2"/>
</dbReference>
<dbReference type="InterPro" id="IPR004172">
    <property type="entry name" value="L27_dom"/>
</dbReference>
<dbReference type="InterPro" id="IPR036892">
    <property type="entry name" value="L27_dom_sf"/>
</dbReference>
<dbReference type="InterPro" id="IPR032078">
    <property type="entry name" value="MPDZ_u10"/>
</dbReference>
<dbReference type="InterPro" id="IPR001478">
    <property type="entry name" value="PDZ"/>
</dbReference>
<dbReference type="InterPro" id="IPR051342">
    <property type="entry name" value="PDZ_scaffold"/>
</dbReference>
<dbReference type="InterPro" id="IPR036034">
    <property type="entry name" value="PDZ_sf"/>
</dbReference>
<dbReference type="PANTHER" id="PTHR19964">
    <property type="entry name" value="MULTIPLE PDZ DOMAIN PROTEIN"/>
    <property type="match status" value="1"/>
</dbReference>
<dbReference type="PANTHER" id="PTHR19964:SF97">
    <property type="entry name" value="PDZ DOMAIN-CONTAINING PROTEIN"/>
    <property type="match status" value="1"/>
</dbReference>
<dbReference type="Pfam" id="PF09045">
    <property type="entry name" value="L27_2"/>
    <property type="match status" value="1"/>
</dbReference>
<dbReference type="Pfam" id="PF16667">
    <property type="entry name" value="MPDZ_u10"/>
    <property type="match status" value="1"/>
</dbReference>
<dbReference type="Pfam" id="PF00595">
    <property type="entry name" value="PDZ"/>
    <property type="match status" value="13"/>
</dbReference>
<dbReference type="SMART" id="SM00569">
    <property type="entry name" value="L27"/>
    <property type="match status" value="1"/>
</dbReference>
<dbReference type="SMART" id="SM00228">
    <property type="entry name" value="PDZ"/>
    <property type="match status" value="13"/>
</dbReference>
<dbReference type="SUPFAM" id="SSF101288">
    <property type="entry name" value="L27 domain"/>
    <property type="match status" value="1"/>
</dbReference>
<dbReference type="SUPFAM" id="SSF50156">
    <property type="entry name" value="PDZ domain-like"/>
    <property type="match status" value="13"/>
</dbReference>
<dbReference type="PROSITE" id="PS51022">
    <property type="entry name" value="L27"/>
    <property type="match status" value="1"/>
</dbReference>
<dbReference type="PROSITE" id="PS50106">
    <property type="entry name" value="PDZ"/>
    <property type="match status" value="13"/>
</dbReference>
<reference key="1">
    <citation type="journal article" date="1999" name="Genomics">
        <title>Identification, sequence, and mapping of mouse multiple PDZ domain protein gene, Mpdz.</title>
        <authorList>
            <person name="Simpson E.H."/>
            <person name="Suffolk R."/>
            <person name="Jackson I.J."/>
        </authorList>
    </citation>
    <scope>NUCLEOTIDE SEQUENCE [MRNA] (ISOFORM 1)</scope>
    <source>
        <strain>C57BL/6 X CBA</strain>
        <tissue>Brain</tissue>
    </source>
</reference>
<reference key="2">
    <citation type="journal article" date="2002" name="J. Neurosci.">
        <title>Congenic mapping of alcohol and pentobarbital withdrawal liability loci to a &lt;1 centimorgan interval of murine chromosome 4: identification of Mpdz as a candidate gene.</title>
        <authorList>
            <person name="Fehr C."/>
            <person name="Shirley R.L."/>
            <person name="Belknap J.K."/>
            <person name="Crabbe J.C."/>
            <person name="Buck K.J."/>
        </authorList>
    </citation>
    <scope>NUCLEOTIDE SEQUENCE [MRNA] (ISOFORM 1)</scope>
    <scope>VARIANTS SER-541; VAL-691; ARG-801; ALA-859; ASN-880; SER-914; VAL-977; MET-1338; ASN-1433 AND ASN-1767</scope>
    <source>
        <strain>129/J</strain>
        <strain>A/HeJ</strain>
        <strain>AKR/J</strain>
        <strain>BALB/cJ</strain>
        <strain>C3H/J</strain>
        <strain>C57BL/6J</strain>
        <strain>C57BR/cdJ</strain>
        <strain>C57L/J</strain>
        <strain>CBA/J</strain>
        <strain>CE/J</strain>
        <strain>DBA/2J</strain>
        <strain>DBA1/J</strain>
        <strain>PL/J</strain>
        <strain>SJL/J</strain>
        <strain>SWR/J</strain>
        <strain>WSP1</strain>
        <strain>WSP2</strain>
        <strain>WSR1</strain>
        <strain>WSR2</strain>
        <tissue>Brain</tissue>
    </source>
</reference>
<reference key="3">
    <citation type="journal article" date="2009" name="PLoS Biol.">
        <title>Lineage-specific biology revealed by a finished genome assembly of the mouse.</title>
        <authorList>
            <person name="Church D.M."/>
            <person name="Goodstadt L."/>
            <person name="Hillier L.W."/>
            <person name="Zody M.C."/>
            <person name="Goldstein S."/>
            <person name="She X."/>
            <person name="Bult C.J."/>
            <person name="Agarwala R."/>
            <person name="Cherry J.L."/>
            <person name="DiCuccio M."/>
            <person name="Hlavina W."/>
            <person name="Kapustin Y."/>
            <person name="Meric P."/>
            <person name="Maglott D."/>
            <person name="Birtle Z."/>
            <person name="Marques A.C."/>
            <person name="Graves T."/>
            <person name="Zhou S."/>
            <person name="Teague B."/>
            <person name="Potamousis K."/>
            <person name="Churas C."/>
            <person name="Place M."/>
            <person name="Herschleb J."/>
            <person name="Runnheim R."/>
            <person name="Forrest D."/>
            <person name="Amos-Landgraf J."/>
            <person name="Schwartz D.C."/>
            <person name="Cheng Z."/>
            <person name="Lindblad-Toh K."/>
            <person name="Eichler E.E."/>
            <person name="Ponting C.P."/>
        </authorList>
    </citation>
    <scope>NUCLEOTIDE SEQUENCE [LARGE SCALE GENOMIC DNA]</scope>
    <source>
        <strain>C57BL/6J</strain>
    </source>
</reference>
<reference key="4">
    <citation type="journal article" date="2004" name="Genome Res.">
        <title>The status, quality, and expansion of the NIH full-length cDNA project: the Mammalian Gene Collection (MGC).</title>
        <authorList>
            <consortium name="The MGC Project Team"/>
        </authorList>
    </citation>
    <scope>NUCLEOTIDE SEQUENCE [LARGE SCALE MRNA] (ISOFORM 2)</scope>
    <source>
        <strain>FVB/N</strain>
        <tissue>Brain</tissue>
        <tissue>Kidney</tissue>
        <tissue>Mammary tumor</tissue>
    </source>
</reference>
<reference key="5">
    <citation type="journal article" date="1997" name="Proc. Natl. Acad. Sci. U.S.A.">
        <title>Binding of human virus oncoproteins to hDlg/SAP97, a mammalian homolog of the Drosophila discs large tumor suppressor protein.</title>
        <authorList>
            <person name="Lee S.S."/>
            <person name="Weiss R.S."/>
            <person name="Javier R.T."/>
        </authorList>
    </citation>
    <scope>NUCLEOTIDE SEQUENCE [MRNA] OF 1532-2055 (ISOFORM 4)</scope>
    <source>
        <tissue>Pancreas</tissue>
    </source>
</reference>
<reference key="6">
    <citation type="journal article" date="2005" name="Science">
        <title>The transcriptional landscape of the mammalian genome.</title>
        <authorList>
            <person name="Carninci P."/>
            <person name="Kasukawa T."/>
            <person name="Katayama S."/>
            <person name="Gough J."/>
            <person name="Frith M.C."/>
            <person name="Maeda N."/>
            <person name="Oyama R."/>
            <person name="Ravasi T."/>
            <person name="Lenhard B."/>
            <person name="Wells C."/>
            <person name="Kodzius R."/>
            <person name="Shimokawa K."/>
            <person name="Bajic V.B."/>
            <person name="Brenner S.E."/>
            <person name="Batalov S."/>
            <person name="Forrest A.R."/>
            <person name="Zavolan M."/>
            <person name="Davis M.J."/>
            <person name="Wilming L.G."/>
            <person name="Aidinis V."/>
            <person name="Allen J.E."/>
            <person name="Ambesi-Impiombato A."/>
            <person name="Apweiler R."/>
            <person name="Aturaliya R.N."/>
            <person name="Bailey T.L."/>
            <person name="Bansal M."/>
            <person name="Baxter L."/>
            <person name="Beisel K.W."/>
            <person name="Bersano T."/>
            <person name="Bono H."/>
            <person name="Chalk A.M."/>
            <person name="Chiu K.P."/>
            <person name="Choudhary V."/>
            <person name="Christoffels A."/>
            <person name="Clutterbuck D.R."/>
            <person name="Crowe M.L."/>
            <person name="Dalla E."/>
            <person name="Dalrymple B.P."/>
            <person name="de Bono B."/>
            <person name="Della Gatta G."/>
            <person name="di Bernardo D."/>
            <person name="Down T."/>
            <person name="Engstrom P."/>
            <person name="Fagiolini M."/>
            <person name="Faulkner G."/>
            <person name="Fletcher C.F."/>
            <person name="Fukushima T."/>
            <person name="Furuno M."/>
            <person name="Futaki S."/>
            <person name="Gariboldi M."/>
            <person name="Georgii-Hemming P."/>
            <person name="Gingeras T.R."/>
            <person name="Gojobori T."/>
            <person name="Green R.E."/>
            <person name="Gustincich S."/>
            <person name="Harbers M."/>
            <person name="Hayashi Y."/>
            <person name="Hensch T.K."/>
            <person name="Hirokawa N."/>
            <person name="Hill D."/>
            <person name="Huminiecki L."/>
            <person name="Iacono M."/>
            <person name="Ikeo K."/>
            <person name="Iwama A."/>
            <person name="Ishikawa T."/>
            <person name="Jakt M."/>
            <person name="Kanapin A."/>
            <person name="Katoh M."/>
            <person name="Kawasawa Y."/>
            <person name="Kelso J."/>
            <person name="Kitamura H."/>
            <person name="Kitano H."/>
            <person name="Kollias G."/>
            <person name="Krishnan S.P."/>
            <person name="Kruger A."/>
            <person name="Kummerfeld S.K."/>
            <person name="Kurochkin I.V."/>
            <person name="Lareau L.F."/>
            <person name="Lazarevic D."/>
            <person name="Lipovich L."/>
            <person name="Liu J."/>
            <person name="Liuni S."/>
            <person name="McWilliam S."/>
            <person name="Madan Babu M."/>
            <person name="Madera M."/>
            <person name="Marchionni L."/>
            <person name="Matsuda H."/>
            <person name="Matsuzawa S."/>
            <person name="Miki H."/>
            <person name="Mignone F."/>
            <person name="Miyake S."/>
            <person name="Morris K."/>
            <person name="Mottagui-Tabar S."/>
            <person name="Mulder N."/>
            <person name="Nakano N."/>
            <person name="Nakauchi H."/>
            <person name="Ng P."/>
            <person name="Nilsson R."/>
            <person name="Nishiguchi S."/>
            <person name="Nishikawa S."/>
            <person name="Nori F."/>
            <person name="Ohara O."/>
            <person name="Okazaki Y."/>
            <person name="Orlando V."/>
            <person name="Pang K.C."/>
            <person name="Pavan W.J."/>
            <person name="Pavesi G."/>
            <person name="Pesole G."/>
            <person name="Petrovsky N."/>
            <person name="Piazza S."/>
            <person name="Reed J."/>
            <person name="Reid J.F."/>
            <person name="Ring B.Z."/>
            <person name="Ringwald M."/>
            <person name="Rost B."/>
            <person name="Ruan Y."/>
            <person name="Salzberg S.L."/>
            <person name="Sandelin A."/>
            <person name="Schneider C."/>
            <person name="Schoenbach C."/>
            <person name="Sekiguchi K."/>
            <person name="Semple C.A."/>
            <person name="Seno S."/>
            <person name="Sessa L."/>
            <person name="Sheng Y."/>
            <person name="Shibata Y."/>
            <person name="Shimada H."/>
            <person name="Shimada K."/>
            <person name="Silva D."/>
            <person name="Sinclair B."/>
            <person name="Sperling S."/>
            <person name="Stupka E."/>
            <person name="Sugiura K."/>
            <person name="Sultana R."/>
            <person name="Takenaka Y."/>
            <person name="Taki K."/>
            <person name="Tammoja K."/>
            <person name="Tan S.L."/>
            <person name="Tang S."/>
            <person name="Taylor M.S."/>
            <person name="Tegner J."/>
            <person name="Teichmann S.A."/>
            <person name="Ueda H.R."/>
            <person name="van Nimwegen E."/>
            <person name="Verardo R."/>
            <person name="Wei C.L."/>
            <person name="Yagi K."/>
            <person name="Yamanishi H."/>
            <person name="Zabarovsky E."/>
            <person name="Zhu S."/>
            <person name="Zimmer A."/>
            <person name="Hide W."/>
            <person name="Bult C."/>
            <person name="Grimmond S.M."/>
            <person name="Teasdale R.D."/>
            <person name="Liu E.T."/>
            <person name="Brusic V."/>
            <person name="Quackenbush J."/>
            <person name="Wahlestedt C."/>
            <person name="Mattick J.S."/>
            <person name="Hume D.A."/>
            <person name="Kai C."/>
            <person name="Sasaki D."/>
            <person name="Tomaru Y."/>
            <person name="Fukuda S."/>
            <person name="Kanamori-Katayama M."/>
            <person name="Suzuki M."/>
            <person name="Aoki J."/>
            <person name="Arakawa T."/>
            <person name="Iida J."/>
            <person name="Imamura K."/>
            <person name="Itoh M."/>
            <person name="Kato T."/>
            <person name="Kawaji H."/>
            <person name="Kawagashira N."/>
            <person name="Kawashima T."/>
            <person name="Kojima M."/>
            <person name="Kondo S."/>
            <person name="Konno H."/>
            <person name="Nakano K."/>
            <person name="Ninomiya N."/>
            <person name="Nishio T."/>
            <person name="Okada M."/>
            <person name="Plessy C."/>
            <person name="Shibata K."/>
            <person name="Shiraki T."/>
            <person name="Suzuki S."/>
            <person name="Tagami M."/>
            <person name="Waki K."/>
            <person name="Watahiki A."/>
            <person name="Okamura-Oho Y."/>
            <person name="Suzuki H."/>
            <person name="Kawai J."/>
            <person name="Hayashizaki Y."/>
        </authorList>
    </citation>
    <scope>NUCLEOTIDE SEQUENCE [LARGE SCALE MRNA] (ISOFORM 3)</scope>
    <scope>NUCLEOTIDE SEQUENCE [LARGE SCALE MRNA] OF 1-62 (ISOFORM 1)</scope>
    <source>
        <strain>C57BL/6J</strain>
        <tissue>Spinal ganglion</tissue>
        <tissue>Testis</tissue>
    </source>
</reference>
<reference key="7">
    <citation type="journal article" date="2000" name="FEBS Lett.">
        <title>The direct association of the multiple PDZ domain containing proteins (MUPP-1) with the human c-Kit C-terminus is regulated by tyrosine kinase activity.</title>
        <authorList>
            <person name="Mancini A."/>
            <person name="Koch A."/>
            <person name="Stefan M."/>
            <person name="Niemann H."/>
            <person name="Tamura T."/>
        </authorList>
    </citation>
    <scope>INTERACTION WITH KIT</scope>
    <scope>TISSUE SPECIFICITY</scope>
</reference>
<reference key="8">
    <citation type="journal article" date="2000" name="J. Cell. Biochem.">
        <title>The multi-PDZ domain protein MUPP1 is a cytoplasmic ligand for the membrane-spanning proteoglycan NG2.</title>
        <authorList>
            <person name="Barritt D.S."/>
            <person name="Pearn M.T."/>
            <person name="Zisch A.H."/>
            <person name="Lee S.S."/>
            <person name="Javier R.T."/>
            <person name="Pasquale E.B."/>
            <person name="Stallcup W.B."/>
        </authorList>
    </citation>
    <scope>INTERACTION WITH NG2</scope>
</reference>
<reference key="9">
    <citation type="journal article" date="2000" name="J. Virol.">
        <title>Multi-PDZ domain protein MUPP1 is a cellular target for both adenovirus E4-ORF1 and high-risk papillomavirus type 18 E6 oncoproteins.</title>
        <authorList>
            <person name="Lee S.S."/>
            <person name="Glaunsinger B."/>
            <person name="Mantovani F."/>
            <person name="Banks L."/>
            <person name="Javier R.T."/>
        </authorList>
    </citation>
    <scope>INTERACTION WITH ADENOVIRUS TYPE 9 E4-ORF1 PROTEIN</scope>
</reference>
<reference key="10">
    <citation type="journal article" date="2002" name="J. Biol. Chem.">
        <title>Multi-PDZ domain protein 1 (MUPP1) is concentrated at tight junctions through its possible interaction with claudin-1 and junctional adhesion molecule.</title>
        <authorList>
            <person name="Hamazaki Y."/>
            <person name="Itoh M."/>
            <person name="Sasaki H."/>
            <person name="Furuse M."/>
            <person name="Tsukita S."/>
        </authorList>
    </citation>
    <scope>INTERACTION WITH CLDN1 AND F11R</scope>
    <scope>DOMAINS</scope>
    <scope>SUBCELLULAR LOCATION</scope>
</reference>
<reference key="11">
    <citation type="journal article" date="2002" name="J. Cell Biol.">
        <title>Distinct claudins and associated PDZ proteins form different autotypic tight junctions in myelinating Schwann cells.</title>
        <authorList>
            <person name="Poliak S."/>
            <person name="Matlis S."/>
            <person name="Ullmer C."/>
            <person name="Scherer S.S."/>
            <person name="Peles E."/>
        </authorList>
    </citation>
    <scope>SUBCELLULAR LOCATION</scope>
</reference>
<reference key="12">
    <citation type="journal article" date="2003" name="Brain Res.">
        <title>Expression of MUPP1 protein in mouse brain.</title>
        <authorList>
            <person name="Sitek B."/>
            <person name="Poschmann G."/>
            <person name="Schmidtke K."/>
            <person name="Ullmer C."/>
            <person name="Maskri L."/>
            <person name="Andriske M."/>
            <person name="Stichel C.C."/>
            <person name="Zhu X.-R."/>
            <person name="Luebbert H."/>
        </authorList>
    </citation>
    <scope>TISSUE SPECIFICITY</scope>
</reference>
<reference key="13">
    <citation type="journal article" date="2004" name="Development">
        <title>Delta proteins and MAGI proteins: an interaction of Notch ligands with intracellular scaffolding molecules and its significance for zebrafish development.</title>
        <authorList>
            <person name="Wright G.J."/>
            <person name="Leslie J.D."/>
            <person name="Ariza-McNaughton L."/>
            <person name="Lewis J."/>
        </authorList>
    </citation>
    <scope>INTERACTION WITH DLL1</scope>
</reference>
<reference key="14">
    <citation type="journal article" date="2004" name="J. Biol. Chem.">
        <title>The coxsackievirus and adenovirus receptor interacts with the multi-PDZ domain protein-1 (MUPP-1) within the tight junction.</title>
        <authorList>
            <person name="Coyne C.B."/>
            <person name="Voelker T."/>
            <person name="Pichla S.L."/>
            <person name="Bergelson J.M."/>
        </authorList>
    </citation>
    <scope>INTERACTION WITH CXADR</scope>
    <scope>DOMAIN</scope>
</reference>
<reference key="15">
    <citation type="journal article" date="2004" name="J. Cell Sci.">
        <title>Crumbs homologue 1 is required for maintenance of photoreceptor cell polarization and adhesion during light exposure.</title>
        <authorList>
            <person name="van de Pavert S.A."/>
            <person name="Kantardzhieva A."/>
            <person name="Malysheva A."/>
            <person name="Meuleman J."/>
            <person name="Versteeg I."/>
            <person name="Levelt C."/>
            <person name="Klooster J."/>
            <person name="Geiger S."/>
            <person name="Seeliger M.W."/>
            <person name="Rashbass P."/>
            <person name="Le Bivic A."/>
            <person name="Wijnholds J."/>
        </authorList>
    </citation>
    <scope>INTERACTION WITH CRB1; PALS1 AND MPP4</scope>
    <scope>SUBCELLULAR LOCATION</scope>
</reference>
<reference key="16">
    <citation type="journal article" date="2007" name="Proc. Natl. Acad. Sci. U.S.A.">
        <title>Large-scale phosphorylation analysis of mouse liver.</title>
        <authorList>
            <person name="Villen J."/>
            <person name="Beausoleil S.A."/>
            <person name="Gerber S.A."/>
            <person name="Gygi S.P."/>
        </authorList>
    </citation>
    <scope>IDENTIFICATION BY MASS SPECTROMETRY [LARGE SCALE ANALYSIS]</scope>
    <source>
        <tissue>Liver</tissue>
    </source>
</reference>
<reference key="17">
    <citation type="journal article" date="2009" name="J. Cell Biol.">
        <title>Mammalian Fat and Dachsous cadherins regulate apical membrane organization in the embryonic cerebral cortex.</title>
        <authorList>
            <person name="Ishiuchi T."/>
            <person name="Misaki K."/>
            <person name="Yonemura S."/>
            <person name="Takeichi M."/>
            <person name="Tanoue T."/>
        </authorList>
    </citation>
    <scope>INTERACTION WITH FAT4</scope>
</reference>
<reference key="18">
    <citation type="journal article" date="2010" name="Cell">
        <title>A tissue-specific atlas of mouse protein phosphorylation and expression.</title>
        <authorList>
            <person name="Huttlin E.L."/>
            <person name="Jedrychowski M.P."/>
            <person name="Elias J.E."/>
            <person name="Goswami T."/>
            <person name="Rad R."/>
            <person name="Beausoleil S.A."/>
            <person name="Villen J."/>
            <person name="Haas W."/>
            <person name="Sowa M.E."/>
            <person name="Gygi S.P."/>
        </authorList>
    </citation>
    <scope>IDENTIFICATION BY MASS SPECTROMETRY [LARGE SCALE ANALYSIS]</scope>
    <source>
        <tissue>Brain</tissue>
        <tissue>Heart</tissue>
        <tissue>Kidney</tissue>
        <tissue>Liver</tissue>
        <tissue>Lung</tissue>
    </source>
</reference>
<reference key="19">
    <citation type="journal article" date="2013" name="Hum. Mol. Genet.">
        <title>Loss of CRB2 in the mouse retina mimics human retinitis pigmentosa due to mutations in the CRB1 gene.</title>
        <authorList>
            <person name="Alves C.H."/>
            <person name="Sanz A.S."/>
            <person name="Park B."/>
            <person name="Pellissier L.P."/>
            <person name="Tanimoto N."/>
            <person name="Beck S.C."/>
            <person name="Huber G."/>
            <person name="Murtaza M."/>
            <person name="Richard F."/>
            <person name="Sridevi Gurubaran I."/>
            <person name="Garcia Garrido M."/>
            <person name="Levelt C.N."/>
            <person name="Rashbass P."/>
            <person name="Le Bivic A."/>
            <person name="Seeliger M.W."/>
            <person name="Wijnholds J."/>
        </authorList>
    </citation>
    <scope>DEVELOPMENTAL STAGE</scope>
</reference>
<reference key="20">
    <citation type="journal article" date="2014" name="Mol. Cell. Proteomics">
        <title>Immunoaffinity enrichment and mass spectrometry analysis of protein methylation.</title>
        <authorList>
            <person name="Guo A."/>
            <person name="Gu H."/>
            <person name="Zhou J."/>
            <person name="Mulhern D."/>
            <person name="Wang Y."/>
            <person name="Lee K.A."/>
            <person name="Yang V."/>
            <person name="Aguiar M."/>
            <person name="Kornhauser J."/>
            <person name="Jia X."/>
            <person name="Ren J."/>
            <person name="Beausoleil S.A."/>
            <person name="Silva J.C."/>
            <person name="Vemulapalli V."/>
            <person name="Bedford M.T."/>
            <person name="Comb M.J."/>
        </authorList>
    </citation>
    <scope>METHYLATION [LARGE SCALE ANALYSIS] AT ARG-1158</scope>
    <scope>IDENTIFICATION BY MASS SPECTROMETRY [LARGE SCALE ANALYSIS]</scope>
    <source>
        <tissue>Brain</tissue>
        <tissue>Embryo</tissue>
    </source>
</reference>
<keyword id="KW-0002">3D-structure</keyword>
<keyword id="KW-0025">Alternative splicing</keyword>
<keyword id="KW-0965">Cell junction</keyword>
<keyword id="KW-1003">Cell membrane</keyword>
<keyword id="KW-0966">Cell projection</keyword>
<keyword id="KW-0472">Membrane</keyword>
<keyword id="KW-0488">Methylation</keyword>
<keyword id="KW-0597">Phosphoprotein</keyword>
<keyword id="KW-1185">Reference proteome</keyword>
<keyword id="KW-0677">Repeat</keyword>
<keyword id="KW-0770">Synapse</keyword>
<keyword id="KW-0771">Synaptosome</keyword>
<keyword id="KW-0796">Tight junction</keyword>
<protein>
    <recommendedName>
        <fullName>Multiple PDZ domain protein</fullName>
    </recommendedName>
    <alternativeName>
        <fullName>Multi-PDZ domain protein 1</fullName>
    </alternativeName>
</protein>
<name>MPDZ_MOUSE</name>
<evidence type="ECO:0000250" key="1"/>
<evidence type="ECO:0000250" key="2">
    <source>
        <dbReference type="UniProtKB" id="O55164"/>
    </source>
</evidence>
<evidence type="ECO:0000250" key="3">
    <source>
        <dbReference type="UniProtKB" id="O75970"/>
    </source>
</evidence>
<evidence type="ECO:0000255" key="4">
    <source>
        <dbReference type="PROSITE-ProRule" id="PRU00143"/>
    </source>
</evidence>
<evidence type="ECO:0000255" key="5">
    <source>
        <dbReference type="PROSITE-ProRule" id="PRU00365"/>
    </source>
</evidence>
<evidence type="ECO:0000256" key="6">
    <source>
        <dbReference type="SAM" id="MobiDB-lite"/>
    </source>
</evidence>
<evidence type="ECO:0000269" key="7">
    <source>
    </source>
</evidence>
<evidence type="ECO:0000269" key="8">
    <source>
    </source>
</evidence>
<evidence type="ECO:0000269" key="9">
    <source>
    </source>
</evidence>
<evidence type="ECO:0000269" key="10">
    <source>
    </source>
</evidence>
<evidence type="ECO:0000269" key="11">
    <source>
    </source>
</evidence>
<evidence type="ECO:0000269" key="12">
    <source>
    </source>
</evidence>
<evidence type="ECO:0000269" key="13">
    <source>
    </source>
</evidence>
<evidence type="ECO:0000269" key="14">
    <source>
    </source>
</evidence>
<evidence type="ECO:0000269" key="15">
    <source>
    </source>
</evidence>
<evidence type="ECO:0000269" key="16">
    <source>
    </source>
</evidence>
<evidence type="ECO:0000269" key="17">
    <source>
    </source>
</evidence>
<evidence type="ECO:0000303" key="18">
    <source>
    </source>
</evidence>
<evidence type="ECO:0000303" key="19">
    <source>
    </source>
</evidence>
<evidence type="ECO:0000303" key="20">
    <source>
    </source>
</evidence>
<evidence type="ECO:0000305" key="21"/>
<evidence type="ECO:0007744" key="22">
    <source>
    </source>
</evidence>
<evidence type="ECO:0007829" key="23">
    <source>
        <dbReference type="PDB" id="4XH7"/>
    </source>
</evidence>
<gene>
    <name type="primary">Mpdz</name>
    <name type="synonym">Mupp1</name>
</gene>